<feature type="chain" id="PRO_0000157826" description="Deglycase PfpI">
    <location>
        <begin position="1"/>
        <end position="166"/>
    </location>
</feature>
<feature type="domain" description="PfpI endopeptidase" evidence="2">
    <location>
        <begin position="1"/>
        <end position="166"/>
    </location>
</feature>
<feature type="active site" description="Nucleophile" evidence="2">
    <location>
        <position position="100"/>
    </location>
</feature>
<feature type="active site" evidence="2">
    <location>
        <position position="101"/>
    </location>
</feature>
<name>DEGLY_PYRFU</name>
<reference key="1">
    <citation type="journal article" date="1996" name="J. Bacteriol.">
        <title>Sequence, expression in Escherichia coli, and analysis of the gene encoding a novel intracellular protease (PfpI) from the hyperthermophilic archaeon Pyrococcus furiosus.</title>
        <authorList>
            <person name="Halio S.B."/>
            <person name="Blumentals I.I."/>
            <person name="Short S.A."/>
            <person name="Merrill B.M."/>
            <person name="Kelly R.M."/>
        </authorList>
    </citation>
    <scope>NUCLEOTIDE SEQUENCE [GENOMIC DNA]</scope>
    <scope>PROTEIN SEQUENCE OF 1-28; 128-157 AND 159-166</scope>
    <scope>FUNCTION AS A PROTEASE</scope>
    <scope>BIOPHYSICOCHEMICAL PROPERTIES</scope>
    <scope>SUBCELLULAR LOCATION</scope>
    <scope>SUBUNIT</scope>
    <source>
        <strain>ATCC 43587 / DSM 3638 / JCM 8422 / Vc1</strain>
    </source>
</reference>
<reference key="2">
    <citation type="journal article" date="1999" name="Genetics">
        <title>Divergence of the hyperthermophilic archaea Pyrococcus furiosus and P. horikoshii inferred from complete genomic sequences.</title>
        <authorList>
            <person name="Maeder D.L."/>
            <person name="Weiss R.B."/>
            <person name="Dunn D.M."/>
            <person name="Cherry J.L."/>
            <person name="Gonzalez J.M."/>
            <person name="DiRuggiero J."/>
            <person name="Robb F.T."/>
        </authorList>
    </citation>
    <scope>NUCLEOTIDE SEQUENCE [LARGE SCALE GENOMIC DNA]</scope>
    <source>
        <strain>ATCC 43587 / DSM 3638 / JCM 8422 / Vc1</strain>
    </source>
</reference>
<reference key="3">
    <citation type="journal article" date="1997" name="Appl. Environ. Microbiol.">
        <title>Purification and characterization of two functional forms of intracellular protease PfpI from the hyperthermophilic archaeon Pyrococcus furiosus.</title>
        <authorList>
            <person name="Halio S.B."/>
            <person name="Bauer M.W."/>
            <person name="Mukund S."/>
            <person name="Adams M."/>
            <person name="Kelly R.M."/>
        </authorList>
    </citation>
    <scope>FUNCTION AS A PROTEASE</scope>
    <scope>CATALYTIC ACTIVITY</scope>
    <scope>BIOPHYSICOCHEMICAL PROPERTIES</scope>
    <scope>SUBUNIT</scope>
    <source>
        <strain>ATCC 43587 / DSM 3638 / JCM 8422 / Vc1</strain>
    </source>
</reference>
<reference key="4">
    <citation type="journal article" date="2016" name="Biochem. Biophys. Res. Commun.">
        <title>DJ-1 family Maillard deglycases prevent acrylamide formation.</title>
        <authorList>
            <person name="Richarme G."/>
            <person name="Marguet E."/>
            <person name="Forterre P."/>
            <person name="Ishino S."/>
            <person name="Ishino Y."/>
        </authorList>
    </citation>
    <scope>FUNCTION AS A DEGLYCASE</scope>
    <scope>BIOTECHNOLOGY</scope>
</reference>
<sequence>MKILFLSANEFEDVELIYPYHRLKEEGHEVYIASFEKGVITGKHGYSVKVDLTFDEVNPDEFDALVLPGGRAPERVRLNEKAVEIARKMFTEGKPVATICHGPQILISAGVLKGRKGTSYIGIRDDMINAGVEWIDREVVVDGNWVSSRHPGDLYAWMREFVKLLK</sequence>
<comment type="function">
    <text evidence="1 3 4 5">Deglycase that catalyzes the deglycation of the Maillard adducts formed between amino groups of proteins and reactive carbonyl groups of glyoxals (Probable). Thus, functions as a protein deglycase that repairs methylglyoxal- and glyoxal-glycated proteins, and releases repaired proteins and lactate or glycolate, respectively (PubMed:27530919). Deglycates cysteine, arginine and lysine residues in proteins, and thus reactivates these proteins by reversing glycation by glyoxals (By similarity). Thus, was shown to afford full protection against glycation of thioredoxin by glyoxal (PubMed:27530919). Acts on early glycation intermediates (hemithioacetals and aminocarbinols), preventing the formation of advanced glycation endproducts (AGE) that cause irreversible damage (By similarity). Prevents acrylamide formation in asparagine/glyoxal and asparagine/sugar mixtures, likely by degrading asparagine/glyoxal Maillard adducts formed at high temperatures (PubMed:27530919). Also displays proteolytic activity (PubMed:16535492, PubMed:8626329). Cleaves at the carboxyl side of both basic and hydrophobic residues in the P1 position, indicating trypsin- and chymotrypsin-like specificities (PubMed:16535492).</text>
</comment>
<comment type="catalytic activity">
    <reaction evidence="1 9">
        <text>N(omega)-(1-hydroxy-2-oxopropyl)-L-arginyl-[protein] + H2O = lactate + L-arginyl-[protein] + H(+)</text>
        <dbReference type="Rhea" id="RHEA:49548"/>
        <dbReference type="Rhea" id="RHEA-COMP:10532"/>
        <dbReference type="Rhea" id="RHEA-COMP:12428"/>
        <dbReference type="ChEBI" id="CHEBI:15377"/>
        <dbReference type="ChEBI" id="CHEBI:15378"/>
        <dbReference type="ChEBI" id="CHEBI:24996"/>
        <dbReference type="ChEBI" id="CHEBI:29965"/>
        <dbReference type="ChEBI" id="CHEBI:131708"/>
        <dbReference type="EC" id="3.5.1.124"/>
    </reaction>
</comment>
<comment type="catalytic activity">
    <reaction evidence="1 9">
        <text>N(6)-(1-hydroxy-2-oxopropyl)-L-lysyl-[protein] + H2O = lactate + L-lysyl-[protein] + H(+)</text>
        <dbReference type="Rhea" id="RHEA:49552"/>
        <dbReference type="Rhea" id="RHEA-COMP:9752"/>
        <dbReference type="Rhea" id="RHEA-COMP:12429"/>
        <dbReference type="ChEBI" id="CHEBI:15377"/>
        <dbReference type="ChEBI" id="CHEBI:15378"/>
        <dbReference type="ChEBI" id="CHEBI:24996"/>
        <dbReference type="ChEBI" id="CHEBI:29969"/>
        <dbReference type="ChEBI" id="CHEBI:131709"/>
        <dbReference type="EC" id="3.5.1.124"/>
    </reaction>
</comment>
<comment type="catalytic activity">
    <reaction evidence="1 9">
        <text>S-(1-hydroxy-2-oxopropyl)-L-cysteinyl-[protein] + H2O = lactate + L-cysteinyl-[protein] + H(+)</text>
        <dbReference type="Rhea" id="RHEA:49556"/>
        <dbReference type="Rhea" id="RHEA-COMP:10131"/>
        <dbReference type="Rhea" id="RHEA-COMP:12430"/>
        <dbReference type="ChEBI" id="CHEBI:15377"/>
        <dbReference type="ChEBI" id="CHEBI:15378"/>
        <dbReference type="ChEBI" id="CHEBI:24996"/>
        <dbReference type="ChEBI" id="CHEBI:29950"/>
        <dbReference type="ChEBI" id="CHEBI:131710"/>
        <dbReference type="EC" id="3.5.1.124"/>
    </reaction>
</comment>
<comment type="catalytic activity">
    <reaction evidence="1 9">
        <text>N(omega)-(1-hydroxy-2-oxoethyl)-L-arginyl-[protein] + H2O = L-arginyl-[protein] + glycolate + H(+)</text>
        <dbReference type="Rhea" id="RHEA:57188"/>
        <dbReference type="Rhea" id="RHEA-COMP:10532"/>
        <dbReference type="Rhea" id="RHEA-COMP:14844"/>
        <dbReference type="ChEBI" id="CHEBI:15377"/>
        <dbReference type="ChEBI" id="CHEBI:15378"/>
        <dbReference type="ChEBI" id="CHEBI:29805"/>
        <dbReference type="ChEBI" id="CHEBI:29965"/>
        <dbReference type="ChEBI" id="CHEBI:141553"/>
        <dbReference type="EC" id="3.5.1.124"/>
    </reaction>
</comment>
<comment type="catalytic activity">
    <reaction evidence="1 9">
        <text>N(6)-(1-hydroxy-2-oxoethyl)-L-lysyl-[protein] + H2O = glycolate + L-lysyl-[protein] + H(+)</text>
        <dbReference type="Rhea" id="RHEA:57192"/>
        <dbReference type="Rhea" id="RHEA-COMP:9752"/>
        <dbReference type="Rhea" id="RHEA-COMP:14845"/>
        <dbReference type="ChEBI" id="CHEBI:15377"/>
        <dbReference type="ChEBI" id="CHEBI:15378"/>
        <dbReference type="ChEBI" id="CHEBI:29805"/>
        <dbReference type="ChEBI" id="CHEBI:29969"/>
        <dbReference type="ChEBI" id="CHEBI:141554"/>
        <dbReference type="EC" id="3.5.1.124"/>
    </reaction>
</comment>
<comment type="catalytic activity">
    <reaction evidence="1 9">
        <text>S-(1-hydroxy-2-oxoethyl)-L-cysteinyl-[protein] + H2O = glycolate + L-cysteinyl-[protein] + H(+)</text>
        <dbReference type="Rhea" id="RHEA:57196"/>
        <dbReference type="Rhea" id="RHEA-COMP:10131"/>
        <dbReference type="Rhea" id="RHEA-COMP:14846"/>
        <dbReference type="ChEBI" id="CHEBI:15377"/>
        <dbReference type="ChEBI" id="CHEBI:15378"/>
        <dbReference type="ChEBI" id="CHEBI:29805"/>
        <dbReference type="ChEBI" id="CHEBI:29950"/>
        <dbReference type="ChEBI" id="CHEBI:141555"/>
        <dbReference type="EC" id="3.5.1.124"/>
    </reaction>
</comment>
<comment type="biophysicochemical properties">
    <phDependence>
        <text evidence="3">Optimum pH is 6.3 for proteolytic activity with AAF-MCA as substrate.</text>
    </phDependence>
    <temperatureDependence>
        <text evidence="3 5">Optimum temperature is 84-97 degrees Celsius for proteolytic activity (PubMed:16535492, PubMed:8626329). Thermostable. Displays a half-life of 19 minutes at 95 degrees Celsius (PubMed:8626329).</text>
    </temperatureDependence>
</comment>
<comment type="subunit">
    <text evidence="3 5">Homooligomer (PubMed:8626329). Exists in two functional species: the predominant form is a homohexamer that comprises about 90% of the total activity, and the minor form is trimeric (PubMed:16535492).</text>
</comment>
<comment type="subcellular location">
    <subcellularLocation>
        <location evidence="10">Cytoplasm</location>
    </subcellularLocation>
</comment>
<comment type="biotechnology">
    <text evidence="9">Being able to prevent acrylamide formation at 100 degrees Celsius, this enzyme could constitute a viable and unique enzymatic method to reduce acrylamide formation in food, whose presence is a worldwide concern because it is carcinogenic, reprotoxic and neurotoxic. The use of deglycases is not likely to affect the quality parameters of foods, in contrast with methods which lead to depletion of the components (asparagine and sugars) responsible for acrylamide formation. Moreover, deglycases can be used directly during the thermal process, which avoids a time consuming pre-incubation step. Consequently, many foods whose heating processes occur at around 100 degrees Celsius, such as baby foods, evaporated milk, dry soups and prune juices could be clients of the deglycase method.</text>
</comment>
<comment type="similarity">
    <text evidence="8">Belongs to the peptidase C56 family.</text>
</comment>
<organism>
    <name type="scientific">Pyrococcus furiosus (strain ATCC 43587 / DSM 3638 / JCM 8422 / Vc1)</name>
    <dbReference type="NCBI Taxonomy" id="186497"/>
    <lineage>
        <taxon>Archaea</taxon>
        <taxon>Methanobacteriati</taxon>
        <taxon>Methanobacteriota</taxon>
        <taxon>Thermococci</taxon>
        <taxon>Thermococcales</taxon>
        <taxon>Thermococcaceae</taxon>
        <taxon>Pyrococcus</taxon>
    </lineage>
</organism>
<gene>
    <name evidence="7" type="primary">pfpI</name>
    <name type="ordered locus">PF1719</name>
</gene>
<proteinExistence type="evidence at protein level"/>
<keyword id="KW-0963">Cytoplasm</keyword>
<keyword id="KW-0903">Direct protein sequencing</keyword>
<keyword id="KW-0378">Hydrolase</keyword>
<keyword id="KW-0645">Protease</keyword>
<keyword id="KW-1185">Reference proteome</keyword>
<protein>
    <recommendedName>
        <fullName evidence="6">Deglycase PfpI</fullName>
        <ecNumber evidence="1 9">3.5.1.124</ecNumber>
    </recommendedName>
    <alternativeName>
        <fullName evidence="7">Intracellular protease I</fullName>
        <ecNumber evidence="3">3.4.22.-</ecNumber>
    </alternativeName>
</protein>
<accession>Q51732</accession>
<evidence type="ECO:0000250" key="1">
    <source>
        <dbReference type="UniProtKB" id="P45470"/>
    </source>
</evidence>
<evidence type="ECO:0000255" key="2">
    <source>
        <dbReference type="PROSITE-ProRule" id="PRU00608"/>
    </source>
</evidence>
<evidence type="ECO:0000269" key="3">
    <source>
    </source>
</evidence>
<evidence type="ECO:0000269" key="4">
    <source>
    </source>
</evidence>
<evidence type="ECO:0000269" key="5">
    <source>
    </source>
</evidence>
<evidence type="ECO:0000303" key="6">
    <source>
    </source>
</evidence>
<evidence type="ECO:0000303" key="7">
    <source>
    </source>
</evidence>
<evidence type="ECO:0000305" key="8"/>
<evidence type="ECO:0000305" key="9">
    <source>
    </source>
</evidence>
<evidence type="ECO:0000305" key="10">
    <source>
    </source>
</evidence>
<dbReference type="EC" id="3.5.1.124" evidence="1 9"/>
<dbReference type="EC" id="3.4.22.-" evidence="3"/>
<dbReference type="EMBL" id="U57642">
    <property type="protein sequence ID" value="AAB04694.1"/>
    <property type="molecule type" value="Genomic_DNA"/>
</dbReference>
<dbReference type="EMBL" id="AE009950">
    <property type="protein sequence ID" value="AAL81843.1"/>
    <property type="molecule type" value="Genomic_DNA"/>
</dbReference>
<dbReference type="PIR" id="JC6003">
    <property type="entry name" value="JC6003"/>
</dbReference>
<dbReference type="RefSeq" id="WP_011012865.1">
    <property type="nucleotide sequence ID" value="NZ_CP023154.1"/>
</dbReference>
<dbReference type="SMR" id="Q51732"/>
<dbReference type="STRING" id="186497.PF1719"/>
<dbReference type="MEROPS" id="C56.001"/>
<dbReference type="PaxDb" id="186497-PF1719"/>
<dbReference type="GeneID" id="41713550"/>
<dbReference type="KEGG" id="pfu:PF1719"/>
<dbReference type="PATRIC" id="fig|186497.12.peg.1787"/>
<dbReference type="eggNOG" id="arCOG00769">
    <property type="taxonomic scope" value="Archaea"/>
</dbReference>
<dbReference type="HOGENOM" id="CLU_000445_44_4_2"/>
<dbReference type="OrthoDB" id="82036at2157"/>
<dbReference type="PhylomeDB" id="Q51732"/>
<dbReference type="BRENDA" id="3.4.22.B20">
    <property type="organism ID" value="5243"/>
</dbReference>
<dbReference type="BRENDA" id="3.5.1.124">
    <property type="organism ID" value="5243"/>
</dbReference>
<dbReference type="BRENDA" id="4.2.1.130">
    <property type="organism ID" value="5243"/>
</dbReference>
<dbReference type="Proteomes" id="UP000001013">
    <property type="component" value="Chromosome"/>
</dbReference>
<dbReference type="GO" id="GO:0005737">
    <property type="term" value="C:cytoplasm"/>
    <property type="evidence" value="ECO:0007669"/>
    <property type="project" value="UniProtKB-SubCell"/>
</dbReference>
<dbReference type="GO" id="GO:0008233">
    <property type="term" value="F:peptidase activity"/>
    <property type="evidence" value="ECO:0007669"/>
    <property type="project" value="UniProtKB-KW"/>
</dbReference>
<dbReference type="GO" id="GO:0036524">
    <property type="term" value="F:protein deglycase activity"/>
    <property type="evidence" value="ECO:0007669"/>
    <property type="project" value="UniProtKB-EC"/>
</dbReference>
<dbReference type="GO" id="GO:0006508">
    <property type="term" value="P:proteolysis"/>
    <property type="evidence" value="ECO:0007669"/>
    <property type="project" value="UniProtKB-KW"/>
</dbReference>
<dbReference type="CDD" id="cd03134">
    <property type="entry name" value="GATase1_PfpI_like"/>
    <property type="match status" value="1"/>
</dbReference>
<dbReference type="Gene3D" id="3.40.50.880">
    <property type="match status" value="1"/>
</dbReference>
<dbReference type="InterPro" id="IPR006286">
    <property type="entry name" value="C56_PfpI-like"/>
</dbReference>
<dbReference type="InterPro" id="IPR029062">
    <property type="entry name" value="Class_I_gatase-like"/>
</dbReference>
<dbReference type="InterPro" id="IPR002818">
    <property type="entry name" value="DJ-1/PfpI"/>
</dbReference>
<dbReference type="InterPro" id="IPR053435">
    <property type="entry name" value="Peptidase_C56_Deglycase"/>
</dbReference>
<dbReference type="NCBIfam" id="NF040823">
    <property type="entry name" value="deglyc_PfpI"/>
    <property type="match status" value="1"/>
</dbReference>
<dbReference type="NCBIfam" id="TIGR01382">
    <property type="entry name" value="PfpI"/>
    <property type="match status" value="1"/>
</dbReference>
<dbReference type="PANTHER" id="PTHR42733">
    <property type="entry name" value="DJ-1 PROTEIN"/>
    <property type="match status" value="1"/>
</dbReference>
<dbReference type="PANTHER" id="PTHR42733:SF2">
    <property type="entry name" value="DJ-1_THIJ_PFPI FAMILY PROTEIN"/>
    <property type="match status" value="1"/>
</dbReference>
<dbReference type="Pfam" id="PF01965">
    <property type="entry name" value="DJ-1_PfpI"/>
    <property type="match status" value="1"/>
</dbReference>
<dbReference type="SUPFAM" id="SSF52317">
    <property type="entry name" value="Class I glutamine amidotransferase-like"/>
    <property type="match status" value="1"/>
</dbReference>
<dbReference type="PROSITE" id="PS51276">
    <property type="entry name" value="PEPTIDASE_C56_PFPI"/>
    <property type="match status" value="1"/>
</dbReference>